<reference key="1">
    <citation type="submission" date="2005-08" db="EMBL/GenBank/DDBJ databases">
        <title>Complete sequence of chromosome 1 of Synechococcus elongatus PCC 7942.</title>
        <authorList>
            <consortium name="US DOE Joint Genome Institute"/>
            <person name="Copeland A."/>
            <person name="Lucas S."/>
            <person name="Lapidus A."/>
            <person name="Barry K."/>
            <person name="Detter J.C."/>
            <person name="Glavina T."/>
            <person name="Hammon N."/>
            <person name="Israni S."/>
            <person name="Pitluck S."/>
            <person name="Schmutz J."/>
            <person name="Larimer F."/>
            <person name="Land M."/>
            <person name="Kyrpides N."/>
            <person name="Lykidis A."/>
            <person name="Golden S."/>
            <person name="Richardson P."/>
        </authorList>
    </citation>
    <scope>NUCLEOTIDE SEQUENCE [LARGE SCALE GENOMIC DNA]</scope>
    <source>
        <strain>ATCC 33912 / PCC 7942 / FACHB-805</strain>
    </source>
</reference>
<gene>
    <name evidence="1" type="primary">hslO</name>
    <name type="ordered locus">Synpcc7942_0559</name>
</gene>
<feature type="chain" id="PRO_0000238107" description="33 kDa chaperonin">
    <location>
        <begin position="1"/>
        <end position="297"/>
    </location>
</feature>
<feature type="disulfide bond" description="Redox-active" evidence="1">
    <location>
        <begin position="239"/>
        <end position="241"/>
    </location>
</feature>
<feature type="disulfide bond" description="Redox-active" evidence="1">
    <location>
        <begin position="272"/>
        <end position="275"/>
    </location>
</feature>
<comment type="function">
    <text evidence="1">Redox regulated molecular chaperone. Protects both thermally unfolding and oxidatively damaged proteins from irreversible aggregation. Plays an important role in the bacterial defense system toward oxidative stress.</text>
</comment>
<comment type="subcellular location">
    <subcellularLocation>
        <location evidence="1">Cytoplasm</location>
    </subcellularLocation>
</comment>
<comment type="PTM">
    <text evidence="1">Under oxidizing conditions two disulfide bonds are formed involving the reactive cysteines. Under reducing conditions zinc is bound to the reactive cysteines and the protein is inactive.</text>
</comment>
<comment type="similarity">
    <text evidence="1">Belongs to the HSP33 family.</text>
</comment>
<keyword id="KW-0143">Chaperone</keyword>
<keyword id="KW-0963">Cytoplasm</keyword>
<keyword id="KW-1015">Disulfide bond</keyword>
<keyword id="KW-0676">Redox-active center</keyword>
<keyword id="KW-1185">Reference proteome</keyword>
<keyword id="KW-0862">Zinc</keyword>
<sequence>MADQLIRATAAGGGIRAVGVITTDLTAEAQRKHGLSFVATTALGRSMAAGLLLASSMKKEGSRVNLRIRSAGPLGGLMVDAGLDGTVRGYVEHPAIEIEPNTQGLPDVGRAIGPGYLHVMRDVGYGQPYTSTVELVNGEIGDDVAYYLASSEQTPSAILLGVYLDRQGVEAAGGLLIQVLPQAARDPELVSLLESRISHLKGFTQLLRSGKDLPEILEDLLGDLDLTILAEPRSLRFFCPCTHQRMLGALKIFGAPELRDMIAKDQGAEATCEFCSEVYQASIEELEELISDLETAA</sequence>
<accession>Q31QS8</accession>
<proteinExistence type="inferred from homology"/>
<organism>
    <name type="scientific">Synechococcus elongatus (strain ATCC 33912 / PCC 7942 / FACHB-805)</name>
    <name type="common">Anacystis nidulans R2</name>
    <dbReference type="NCBI Taxonomy" id="1140"/>
    <lineage>
        <taxon>Bacteria</taxon>
        <taxon>Bacillati</taxon>
        <taxon>Cyanobacteriota</taxon>
        <taxon>Cyanophyceae</taxon>
        <taxon>Synechococcales</taxon>
        <taxon>Synechococcaceae</taxon>
        <taxon>Synechococcus</taxon>
    </lineage>
</organism>
<name>HSLO_SYNE7</name>
<evidence type="ECO:0000255" key="1">
    <source>
        <dbReference type="HAMAP-Rule" id="MF_00117"/>
    </source>
</evidence>
<protein>
    <recommendedName>
        <fullName evidence="1">33 kDa chaperonin</fullName>
    </recommendedName>
    <alternativeName>
        <fullName evidence="1">Heat shock protein 33 homolog</fullName>
        <shortName evidence="1">HSP33</shortName>
    </alternativeName>
</protein>
<dbReference type="EMBL" id="CP000100">
    <property type="protein sequence ID" value="ABB56591.1"/>
    <property type="molecule type" value="Genomic_DNA"/>
</dbReference>
<dbReference type="RefSeq" id="WP_011243275.1">
    <property type="nucleotide sequence ID" value="NZ_JACJTX010000002.1"/>
</dbReference>
<dbReference type="SMR" id="Q31QS8"/>
<dbReference type="STRING" id="1140.Synpcc7942_0559"/>
<dbReference type="PaxDb" id="1140-Synpcc7942_0559"/>
<dbReference type="GeneID" id="72429384"/>
<dbReference type="KEGG" id="syf:Synpcc7942_0559"/>
<dbReference type="eggNOG" id="COG1281">
    <property type="taxonomic scope" value="Bacteria"/>
</dbReference>
<dbReference type="HOGENOM" id="CLU_054493_1_0_3"/>
<dbReference type="OrthoDB" id="9776534at2"/>
<dbReference type="BioCyc" id="SYNEL:SYNPCC7942_0559-MONOMER"/>
<dbReference type="Proteomes" id="UP000889800">
    <property type="component" value="Chromosome"/>
</dbReference>
<dbReference type="GO" id="GO:0005737">
    <property type="term" value="C:cytoplasm"/>
    <property type="evidence" value="ECO:0007669"/>
    <property type="project" value="UniProtKB-SubCell"/>
</dbReference>
<dbReference type="GO" id="GO:0044183">
    <property type="term" value="F:protein folding chaperone"/>
    <property type="evidence" value="ECO:0007669"/>
    <property type="project" value="TreeGrafter"/>
</dbReference>
<dbReference type="GO" id="GO:0051082">
    <property type="term" value="F:unfolded protein binding"/>
    <property type="evidence" value="ECO:0007669"/>
    <property type="project" value="UniProtKB-UniRule"/>
</dbReference>
<dbReference type="GO" id="GO:0042026">
    <property type="term" value="P:protein refolding"/>
    <property type="evidence" value="ECO:0007669"/>
    <property type="project" value="TreeGrafter"/>
</dbReference>
<dbReference type="CDD" id="cd00498">
    <property type="entry name" value="Hsp33"/>
    <property type="match status" value="1"/>
</dbReference>
<dbReference type="Gene3D" id="3.55.30.10">
    <property type="entry name" value="Hsp33 domain"/>
    <property type="match status" value="1"/>
</dbReference>
<dbReference type="Gene3D" id="3.90.1280.10">
    <property type="entry name" value="HSP33 redox switch-like"/>
    <property type="match status" value="1"/>
</dbReference>
<dbReference type="HAMAP" id="MF_00117">
    <property type="entry name" value="HslO"/>
    <property type="match status" value="1"/>
</dbReference>
<dbReference type="InterPro" id="IPR000397">
    <property type="entry name" value="Heat_shock_Hsp33"/>
</dbReference>
<dbReference type="InterPro" id="IPR016154">
    <property type="entry name" value="Heat_shock_Hsp33_C"/>
</dbReference>
<dbReference type="InterPro" id="IPR016153">
    <property type="entry name" value="Heat_shock_Hsp33_N"/>
</dbReference>
<dbReference type="NCBIfam" id="NF001033">
    <property type="entry name" value="PRK00114.1"/>
    <property type="match status" value="1"/>
</dbReference>
<dbReference type="PANTHER" id="PTHR30111">
    <property type="entry name" value="33 KDA CHAPERONIN"/>
    <property type="match status" value="1"/>
</dbReference>
<dbReference type="PANTHER" id="PTHR30111:SF1">
    <property type="entry name" value="33 KDA CHAPERONIN"/>
    <property type="match status" value="1"/>
</dbReference>
<dbReference type="Pfam" id="PF01430">
    <property type="entry name" value="HSP33"/>
    <property type="match status" value="1"/>
</dbReference>
<dbReference type="PIRSF" id="PIRSF005261">
    <property type="entry name" value="Heat_shock_Hsp33"/>
    <property type="match status" value="1"/>
</dbReference>
<dbReference type="SUPFAM" id="SSF64397">
    <property type="entry name" value="Hsp33 domain"/>
    <property type="match status" value="1"/>
</dbReference>
<dbReference type="SUPFAM" id="SSF118352">
    <property type="entry name" value="HSP33 redox switch-like"/>
    <property type="match status" value="1"/>
</dbReference>